<feature type="chain" id="PRO_0000376422" description="Probable cell division protein WhiA">
    <location>
        <begin position="1"/>
        <end position="325"/>
    </location>
</feature>
<feature type="DNA-binding region" description="H-T-H motif" evidence="1">
    <location>
        <begin position="280"/>
        <end position="313"/>
    </location>
</feature>
<proteinExistence type="inferred from homology"/>
<sequence>MSFSSTAKAEVSKKLSQNSCCARAAAAAFLKFTGNIYELDGTFSFKTSFENAQTARSFFLLMKNGFSKHCEVSIKKNSKLQKNYVYTIFLPPSSDNIGVLKDLHFVRKGAKEYHLSFSLKEELVRKKCCRKAFLQATFLSCGSITNPEKMYHLEFDVKTKDDAEFLQKVLKSFEFEAKIVERKSHYVVYLKEGDRIVDFLNIIGAHSSLLELENIRIVKELRNNVNRLVNCETANLEKTINASMRHIENIEFIERTIGIENLPQNLQEIARLRIKYKDASLKELGNMLEKPLGKSGVNHRLRKIDKIAEELRKGGVVHAKPSHED</sequence>
<keyword id="KW-0131">Cell cycle</keyword>
<keyword id="KW-0132">Cell division</keyword>
<keyword id="KW-0238">DNA-binding</keyword>
<evidence type="ECO:0000255" key="1">
    <source>
        <dbReference type="HAMAP-Rule" id="MF_01420"/>
    </source>
</evidence>
<name>WHIA_CALBD</name>
<reference key="1">
    <citation type="submission" date="2009-01" db="EMBL/GenBank/DDBJ databases">
        <title>Complete sequence of chromosome of Caldicellulosiruptor becscii DSM 6725.</title>
        <authorList>
            <person name="Lucas S."/>
            <person name="Copeland A."/>
            <person name="Lapidus A."/>
            <person name="Glavina del Rio T."/>
            <person name="Tice H."/>
            <person name="Bruce D."/>
            <person name="Goodwin L."/>
            <person name="Pitluck S."/>
            <person name="Sims D."/>
            <person name="Meincke L."/>
            <person name="Brettin T."/>
            <person name="Detter J.C."/>
            <person name="Han C."/>
            <person name="Larimer F."/>
            <person name="Land M."/>
            <person name="Hauser L."/>
            <person name="Kyrpides N."/>
            <person name="Ovchinnikova G."/>
            <person name="Kataeva I."/>
            <person name="Adams M.W.W."/>
        </authorList>
    </citation>
    <scope>NUCLEOTIDE SEQUENCE [LARGE SCALE GENOMIC DNA]</scope>
    <source>
        <strain>ATCC BAA-1888 / DSM 6725 / KCTC 15123 / Z-1320</strain>
    </source>
</reference>
<organism>
    <name type="scientific">Caldicellulosiruptor bescii (strain ATCC BAA-1888 / DSM 6725 / KCTC 15123 / Z-1320)</name>
    <name type="common">Anaerocellum thermophilum</name>
    <dbReference type="NCBI Taxonomy" id="521460"/>
    <lineage>
        <taxon>Bacteria</taxon>
        <taxon>Bacillati</taxon>
        <taxon>Bacillota</taxon>
        <taxon>Bacillota incertae sedis</taxon>
        <taxon>Caldicellulosiruptorales</taxon>
        <taxon>Caldicellulosiruptoraceae</taxon>
        <taxon>Caldicellulosiruptor</taxon>
    </lineage>
</organism>
<accession>B9MN06</accession>
<comment type="function">
    <text evidence="1">Involved in cell division and chromosome segregation.</text>
</comment>
<comment type="similarity">
    <text evidence="1">Belongs to the WhiA family.</text>
</comment>
<protein>
    <recommendedName>
        <fullName evidence="1">Probable cell division protein WhiA</fullName>
    </recommendedName>
</protein>
<dbReference type="EMBL" id="CP001393">
    <property type="protein sequence ID" value="ACM59462.1"/>
    <property type="molecule type" value="Genomic_DNA"/>
</dbReference>
<dbReference type="RefSeq" id="WP_015906927.1">
    <property type="nucleotide sequence ID" value="NC_012034.1"/>
</dbReference>
<dbReference type="SMR" id="B9MN06"/>
<dbReference type="STRING" id="521460.Athe_0322"/>
<dbReference type="GeneID" id="31771689"/>
<dbReference type="KEGG" id="ate:Athe_0322"/>
<dbReference type="eggNOG" id="COG1481">
    <property type="taxonomic scope" value="Bacteria"/>
</dbReference>
<dbReference type="HOGENOM" id="CLU_053282_0_0_9"/>
<dbReference type="Proteomes" id="UP000007723">
    <property type="component" value="Chromosome"/>
</dbReference>
<dbReference type="GO" id="GO:0003677">
    <property type="term" value="F:DNA binding"/>
    <property type="evidence" value="ECO:0007669"/>
    <property type="project" value="UniProtKB-UniRule"/>
</dbReference>
<dbReference type="GO" id="GO:0051301">
    <property type="term" value="P:cell division"/>
    <property type="evidence" value="ECO:0007669"/>
    <property type="project" value="UniProtKB-UniRule"/>
</dbReference>
<dbReference type="GO" id="GO:0043937">
    <property type="term" value="P:regulation of sporulation"/>
    <property type="evidence" value="ECO:0007669"/>
    <property type="project" value="InterPro"/>
</dbReference>
<dbReference type="Gene3D" id="3.10.28.10">
    <property type="entry name" value="Homing endonucleases"/>
    <property type="match status" value="1"/>
</dbReference>
<dbReference type="HAMAP" id="MF_01420">
    <property type="entry name" value="HTH_type_WhiA"/>
    <property type="match status" value="1"/>
</dbReference>
<dbReference type="InterPro" id="IPR027434">
    <property type="entry name" value="Homing_endonucl"/>
</dbReference>
<dbReference type="InterPro" id="IPR018478">
    <property type="entry name" value="Sporu_reg_WhiA_N_dom"/>
</dbReference>
<dbReference type="InterPro" id="IPR003802">
    <property type="entry name" value="Sporulation_regulator_WhiA"/>
</dbReference>
<dbReference type="InterPro" id="IPR023054">
    <property type="entry name" value="Sporulation_regulator_WhiA_C"/>
</dbReference>
<dbReference type="InterPro" id="IPR039518">
    <property type="entry name" value="WhiA_LAGLIDADG_dom"/>
</dbReference>
<dbReference type="NCBIfam" id="TIGR00647">
    <property type="entry name" value="DNA_bind_WhiA"/>
    <property type="match status" value="1"/>
</dbReference>
<dbReference type="PANTHER" id="PTHR37307">
    <property type="entry name" value="CELL DIVISION PROTEIN WHIA-RELATED"/>
    <property type="match status" value="1"/>
</dbReference>
<dbReference type="PANTHER" id="PTHR37307:SF1">
    <property type="entry name" value="CELL DIVISION PROTEIN WHIA-RELATED"/>
    <property type="match status" value="1"/>
</dbReference>
<dbReference type="Pfam" id="PF02650">
    <property type="entry name" value="HTH_WhiA"/>
    <property type="match status" value="1"/>
</dbReference>
<dbReference type="Pfam" id="PF14527">
    <property type="entry name" value="LAGLIDADG_WhiA"/>
    <property type="match status" value="1"/>
</dbReference>
<dbReference type="Pfam" id="PF10298">
    <property type="entry name" value="WhiA_N"/>
    <property type="match status" value="1"/>
</dbReference>
<dbReference type="SUPFAM" id="SSF55608">
    <property type="entry name" value="Homing endonucleases"/>
    <property type="match status" value="1"/>
</dbReference>
<gene>
    <name evidence="1" type="primary">whiA</name>
    <name type="ordered locus">Athe_0322</name>
</gene>